<evidence type="ECO:0000255" key="1">
    <source>
        <dbReference type="HAMAP-Rule" id="MF_00222"/>
    </source>
</evidence>
<organism>
    <name type="scientific">Listeria monocytogenes serotype 4b (strain F2365)</name>
    <dbReference type="NCBI Taxonomy" id="265669"/>
    <lineage>
        <taxon>Bacteria</taxon>
        <taxon>Bacillati</taxon>
        <taxon>Bacillota</taxon>
        <taxon>Bacilli</taxon>
        <taxon>Bacillales</taxon>
        <taxon>Listeriaceae</taxon>
        <taxon>Listeria</taxon>
    </lineage>
</organism>
<keyword id="KW-0028">Amino-acid biosynthesis</keyword>
<keyword id="KW-0057">Aromatic amino acid biosynthesis</keyword>
<keyword id="KW-0521">NADP</keyword>
<keyword id="KW-0560">Oxidoreductase</keyword>
<accession>Q723F9</accession>
<protein>
    <recommendedName>
        <fullName evidence="1">Shikimate dehydrogenase (NADP(+))</fullName>
        <shortName evidence="1">SDH</shortName>
        <ecNumber evidence="1">1.1.1.25</ecNumber>
    </recommendedName>
</protein>
<proteinExistence type="inferred from homology"/>
<sequence>MTNKITERITGHTELIGLIATPIRHSLSPTMHNEAFAKLGLDYVYLAFEVGDKELKDVVQGFRAMNLRGWNVSMPNKTNIHKYLDKLSPAAELVGAVNTVVNDDGVLTGHITDGTGYMRALKEAGHDIIGKKMTICGAGGAATAICIQAALDGVKEISIFNRKDDFYANAEKTVEKINSKTDCKAQLFDIEDHEQLRKEIAESVIFTNATGVGMKPFEGETLLPSADMLRPELIVSDVVYKPTKTRLLEIAEEQGCQTLNGLGMMLWQGAKAFEIWTHKEMPVDYIKEILF</sequence>
<name>AROE_LISMF</name>
<gene>
    <name evidence="1" type="primary">aroE</name>
    <name type="ordered locus">LMOf2365_0520</name>
</gene>
<comment type="function">
    <text evidence="1">Involved in the biosynthesis of the chorismate, which leads to the biosynthesis of aromatic amino acids. Catalyzes the reversible NADPH linked reduction of 3-dehydroshikimate (DHSA) to yield shikimate (SA).</text>
</comment>
<comment type="catalytic activity">
    <reaction evidence="1">
        <text>shikimate + NADP(+) = 3-dehydroshikimate + NADPH + H(+)</text>
        <dbReference type="Rhea" id="RHEA:17737"/>
        <dbReference type="ChEBI" id="CHEBI:15378"/>
        <dbReference type="ChEBI" id="CHEBI:16630"/>
        <dbReference type="ChEBI" id="CHEBI:36208"/>
        <dbReference type="ChEBI" id="CHEBI:57783"/>
        <dbReference type="ChEBI" id="CHEBI:58349"/>
        <dbReference type="EC" id="1.1.1.25"/>
    </reaction>
</comment>
<comment type="pathway">
    <text evidence="1">Metabolic intermediate biosynthesis; chorismate biosynthesis; chorismate from D-erythrose 4-phosphate and phosphoenolpyruvate: step 4/7.</text>
</comment>
<comment type="subunit">
    <text evidence="1">Homodimer.</text>
</comment>
<comment type="similarity">
    <text evidence="1">Belongs to the shikimate dehydrogenase family.</text>
</comment>
<dbReference type="EC" id="1.1.1.25" evidence="1"/>
<dbReference type="EMBL" id="AE017262">
    <property type="protein sequence ID" value="AAT03302.1"/>
    <property type="molecule type" value="Genomic_DNA"/>
</dbReference>
<dbReference type="RefSeq" id="WP_003725703.1">
    <property type="nucleotide sequence ID" value="NC_002973.6"/>
</dbReference>
<dbReference type="SMR" id="Q723F9"/>
<dbReference type="KEGG" id="lmf:LMOf2365_0520"/>
<dbReference type="HOGENOM" id="CLU_044063_4_4_9"/>
<dbReference type="UniPathway" id="UPA00053">
    <property type="reaction ID" value="UER00087"/>
</dbReference>
<dbReference type="GO" id="GO:0050661">
    <property type="term" value="F:NADP binding"/>
    <property type="evidence" value="ECO:0007669"/>
    <property type="project" value="InterPro"/>
</dbReference>
<dbReference type="GO" id="GO:0004764">
    <property type="term" value="F:shikimate 3-dehydrogenase (NADP+) activity"/>
    <property type="evidence" value="ECO:0007669"/>
    <property type="project" value="UniProtKB-UniRule"/>
</dbReference>
<dbReference type="GO" id="GO:0008652">
    <property type="term" value="P:amino acid biosynthetic process"/>
    <property type="evidence" value="ECO:0007669"/>
    <property type="project" value="UniProtKB-KW"/>
</dbReference>
<dbReference type="GO" id="GO:0009073">
    <property type="term" value="P:aromatic amino acid family biosynthetic process"/>
    <property type="evidence" value="ECO:0007669"/>
    <property type="project" value="UniProtKB-KW"/>
</dbReference>
<dbReference type="GO" id="GO:0009423">
    <property type="term" value="P:chorismate biosynthetic process"/>
    <property type="evidence" value="ECO:0007669"/>
    <property type="project" value="UniProtKB-UniRule"/>
</dbReference>
<dbReference type="GO" id="GO:0019632">
    <property type="term" value="P:shikimate metabolic process"/>
    <property type="evidence" value="ECO:0007669"/>
    <property type="project" value="InterPro"/>
</dbReference>
<dbReference type="CDD" id="cd01065">
    <property type="entry name" value="NAD_bind_Shikimate_DH"/>
    <property type="match status" value="1"/>
</dbReference>
<dbReference type="FunFam" id="3.40.50.10860:FF:000004">
    <property type="entry name" value="Quinate/shikimate dehydrogenase"/>
    <property type="match status" value="1"/>
</dbReference>
<dbReference type="FunFam" id="3.40.50.720:FF:000086">
    <property type="entry name" value="Quinate/shikimate dehydrogenase"/>
    <property type="match status" value="1"/>
</dbReference>
<dbReference type="Gene3D" id="3.40.50.10860">
    <property type="entry name" value="Leucine Dehydrogenase, chain A, domain 1"/>
    <property type="match status" value="1"/>
</dbReference>
<dbReference type="Gene3D" id="3.40.50.720">
    <property type="entry name" value="NAD(P)-binding Rossmann-like Domain"/>
    <property type="match status" value="1"/>
</dbReference>
<dbReference type="HAMAP" id="MF_00222">
    <property type="entry name" value="Shikimate_DH_AroE"/>
    <property type="match status" value="1"/>
</dbReference>
<dbReference type="InterPro" id="IPR046346">
    <property type="entry name" value="Aminoacid_DH-like_N_sf"/>
</dbReference>
<dbReference type="InterPro" id="IPR036291">
    <property type="entry name" value="NAD(P)-bd_dom_sf"/>
</dbReference>
<dbReference type="InterPro" id="IPR041121">
    <property type="entry name" value="SDH_C"/>
</dbReference>
<dbReference type="InterPro" id="IPR011342">
    <property type="entry name" value="Shikimate_DH"/>
</dbReference>
<dbReference type="InterPro" id="IPR013708">
    <property type="entry name" value="Shikimate_DH-bd_N"/>
</dbReference>
<dbReference type="InterPro" id="IPR022893">
    <property type="entry name" value="Shikimate_DH_fam"/>
</dbReference>
<dbReference type="NCBIfam" id="TIGR00507">
    <property type="entry name" value="aroE"/>
    <property type="match status" value="1"/>
</dbReference>
<dbReference type="NCBIfam" id="NF001313">
    <property type="entry name" value="PRK00258.2-1"/>
    <property type="match status" value="1"/>
</dbReference>
<dbReference type="NCBIfam" id="NF001319">
    <property type="entry name" value="PRK00258.3-3"/>
    <property type="match status" value="1"/>
</dbReference>
<dbReference type="PANTHER" id="PTHR21089:SF1">
    <property type="entry name" value="BIFUNCTIONAL 3-DEHYDROQUINATE DEHYDRATASE_SHIKIMATE DEHYDROGENASE, CHLOROPLASTIC"/>
    <property type="match status" value="1"/>
</dbReference>
<dbReference type="PANTHER" id="PTHR21089">
    <property type="entry name" value="SHIKIMATE DEHYDROGENASE"/>
    <property type="match status" value="1"/>
</dbReference>
<dbReference type="Pfam" id="PF18317">
    <property type="entry name" value="SDH_C"/>
    <property type="match status" value="1"/>
</dbReference>
<dbReference type="Pfam" id="PF08501">
    <property type="entry name" value="Shikimate_dh_N"/>
    <property type="match status" value="1"/>
</dbReference>
<dbReference type="SUPFAM" id="SSF53223">
    <property type="entry name" value="Aminoacid dehydrogenase-like, N-terminal domain"/>
    <property type="match status" value="1"/>
</dbReference>
<dbReference type="SUPFAM" id="SSF51735">
    <property type="entry name" value="NAD(P)-binding Rossmann-fold domains"/>
    <property type="match status" value="1"/>
</dbReference>
<feature type="chain" id="PRO_0000136013" description="Shikimate dehydrogenase (NADP(+))">
    <location>
        <begin position="1"/>
        <end position="291"/>
    </location>
</feature>
<feature type="active site" description="Proton acceptor" evidence="1">
    <location>
        <position position="77"/>
    </location>
</feature>
<feature type="binding site" evidence="1">
    <location>
        <begin position="26"/>
        <end position="28"/>
    </location>
    <ligand>
        <name>shikimate</name>
        <dbReference type="ChEBI" id="CHEBI:36208"/>
    </ligand>
</feature>
<feature type="binding site" evidence="1">
    <location>
        <position position="73"/>
    </location>
    <ligand>
        <name>shikimate</name>
        <dbReference type="ChEBI" id="CHEBI:36208"/>
    </ligand>
</feature>
<feature type="binding site" evidence="1">
    <location>
        <position position="98"/>
    </location>
    <ligand>
        <name>shikimate</name>
        <dbReference type="ChEBI" id="CHEBI:36208"/>
    </ligand>
</feature>
<feature type="binding site" evidence="1">
    <location>
        <position position="113"/>
    </location>
    <ligand>
        <name>shikimate</name>
        <dbReference type="ChEBI" id="CHEBI:36208"/>
    </ligand>
</feature>
<feature type="binding site" evidence="1">
    <location>
        <begin position="137"/>
        <end position="141"/>
    </location>
    <ligand>
        <name>NADP(+)</name>
        <dbReference type="ChEBI" id="CHEBI:58349"/>
    </ligand>
</feature>
<feature type="binding site" evidence="1">
    <location>
        <position position="238"/>
    </location>
    <ligand>
        <name>NADP(+)</name>
        <dbReference type="ChEBI" id="CHEBI:58349"/>
    </ligand>
</feature>
<feature type="binding site" evidence="1">
    <location>
        <position position="240"/>
    </location>
    <ligand>
        <name>shikimate</name>
        <dbReference type="ChEBI" id="CHEBI:36208"/>
    </ligand>
</feature>
<feature type="binding site" evidence="1">
    <location>
        <position position="261"/>
    </location>
    <ligand>
        <name>NADP(+)</name>
        <dbReference type="ChEBI" id="CHEBI:58349"/>
    </ligand>
</feature>
<reference key="1">
    <citation type="journal article" date="2004" name="Nucleic Acids Res.">
        <title>Whole genome comparisons of serotype 4b and 1/2a strains of the food-borne pathogen Listeria monocytogenes reveal new insights into the core genome components of this species.</title>
        <authorList>
            <person name="Nelson K.E."/>
            <person name="Fouts D.E."/>
            <person name="Mongodin E.F."/>
            <person name="Ravel J."/>
            <person name="DeBoy R.T."/>
            <person name="Kolonay J.F."/>
            <person name="Rasko D.A."/>
            <person name="Angiuoli S.V."/>
            <person name="Gill S.R."/>
            <person name="Paulsen I.T."/>
            <person name="Peterson J.D."/>
            <person name="White O."/>
            <person name="Nelson W.C."/>
            <person name="Nierman W.C."/>
            <person name="Beanan M.J."/>
            <person name="Brinkac L.M."/>
            <person name="Daugherty S.C."/>
            <person name="Dodson R.J."/>
            <person name="Durkin A.S."/>
            <person name="Madupu R."/>
            <person name="Haft D.H."/>
            <person name="Selengut J."/>
            <person name="Van Aken S.E."/>
            <person name="Khouri H.M."/>
            <person name="Fedorova N."/>
            <person name="Forberger H.A."/>
            <person name="Tran B."/>
            <person name="Kathariou S."/>
            <person name="Wonderling L.D."/>
            <person name="Uhlich G.A."/>
            <person name="Bayles D.O."/>
            <person name="Luchansky J.B."/>
            <person name="Fraser C.M."/>
        </authorList>
    </citation>
    <scope>NUCLEOTIDE SEQUENCE [LARGE SCALE GENOMIC DNA]</scope>
    <source>
        <strain>F2365</strain>
    </source>
</reference>